<sequence length="444" mass="50959">MMEFFPEIPKIQFEGKESTNPLAFKFYDPNEVIDGKPLKDHLKFSVAFWHTFVNEGRDPFGDPTAERPWNRFSDPMDKAFARVDALFEFCEKLNIEYFCFHDRDIAPEGKTLRETNKILDKVVERIKERMKDSNVKLLWGTANLFSHPRYMHGAATTCSADVFAYAAAQVKKALEITKELGGEGYVFWGGREGYETLLNTDLGLELENLARFLRMAVEYAKKIGFTGQFLIEPKPKEPTKHQYDFDVATAYAFLKNHGLDEYFKFNIEANHATLAGHTFQHELRMARILGKLGSIDANQGDLLLGWDTDQFPTNIYDTTLAMYEVIKAGGFTKGGLNFDAKVRRASYKVEDLFIGHIVGMDTFALGFKIAYKLVKDEVLDRFIEEKYRSFKEGIGKEIVEGKADFEKLEEYIIDKEDIELPSGKQEYLESLLNSYIVKTIAELR</sequence>
<proteinExistence type="inferred from homology"/>
<accession>A5ILR5</accession>
<reference key="1">
    <citation type="submission" date="2007-05" db="EMBL/GenBank/DDBJ databases">
        <title>Complete sequence of Thermotoga petrophila RKU-1.</title>
        <authorList>
            <consortium name="US DOE Joint Genome Institute"/>
            <person name="Copeland A."/>
            <person name="Lucas S."/>
            <person name="Lapidus A."/>
            <person name="Barry K."/>
            <person name="Glavina del Rio T."/>
            <person name="Dalin E."/>
            <person name="Tice H."/>
            <person name="Pitluck S."/>
            <person name="Sims D."/>
            <person name="Brettin T."/>
            <person name="Bruce D."/>
            <person name="Detter J.C."/>
            <person name="Han C."/>
            <person name="Tapia R."/>
            <person name="Schmutz J."/>
            <person name="Larimer F."/>
            <person name="Land M."/>
            <person name="Hauser L."/>
            <person name="Kyrpides N."/>
            <person name="Mikhailova N."/>
            <person name="Nelson K."/>
            <person name="Gogarten J.P."/>
            <person name="Noll K."/>
            <person name="Richardson P."/>
        </authorList>
    </citation>
    <scope>NUCLEOTIDE SEQUENCE [LARGE SCALE GENOMIC DNA]</scope>
    <source>
        <strain>ATCC BAA-488 / DSM 13995 / JCM 10881 / RKU-1</strain>
    </source>
</reference>
<comment type="catalytic activity">
    <reaction evidence="1">
        <text>alpha-D-xylose = alpha-D-xylulofuranose</text>
        <dbReference type="Rhea" id="RHEA:22816"/>
        <dbReference type="ChEBI" id="CHEBI:28518"/>
        <dbReference type="ChEBI" id="CHEBI:188998"/>
        <dbReference type="EC" id="5.3.1.5"/>
    </reaction>
</comment>
<comment type="cofactor">
    <cofactor evidence="1">
        <name>Mg(2+)</name>
        <dbReference type="ChEBI" id="CHEBI:18420"/>
    </cofactor>
    <text evidence="1">Binds 2 magnesium ions per subunit.</text>
</comment>
<comment type="subunit">
    <text evidence="1">Homotetramer.</text>
</comment>
<comment type="subcellular location">
    <subcellularLocation>
        <location evidence="1">Cytoplasm</location>
    </subcellularLocation>
</comment>
<comment type="similarity">
    <text evidence="1">Belongs to the xylose isomerase family.</text>
</comment>
<keyword id="KW-0119">Carbohydrate metabolism</keyword>
<keyword id="KW-0963">Cytoplasm</keyword>
<keyword id="KW-0413">Isomerase</keyword>
<keyword id="KW-0460">Magnesium</keyword>
<keyword id="KW-0479">Metal-binding</keyword>
<keyword id="KW-0859">Xylose metabolism</keyword>
<protein>
    <recommendedName>
        <fullName evidence="1">Xylose isomerase</fullName>
        <ecNumber evidence="1">5.3.1.5</ecNumber>
    </recommendedName>
</protein>
<evidence type="ECO:0000255" key="1">
    <source>
        <dbReference type="HAMAP-Rule" id="MF_00455"/>
    </source>
</evidence>
<gene>
    <name evidence="1" type="primary">xylA</name>
    <name type="ordered locus">Tpet_1124</name>
</gene>
<organism>
    <name type="scientific">Thermotoga petrophila (strain ATCC BAA-488 / DSM 13995 / JCM 10881 / RKU-1)</name>
    <dbReference type="NCBI Taxonomy" id="390874"/>
    <lineage>
        <taxon>Bacteria</taxon>
        <taxon>Thermotogati</taxon>
        <taxon>Thermotogota</taxon>
        <taxon>Thermotogae</taxon>
        <taxon>Thermotogales</taxon>
        <taxon>Thermotogaceae</taxon>
        <taxon>Thermotoga</taxon>
    </lineage>
</organism>
<name>XYLA_THEP1</name>
<dbReference type="EC" id="5.3.1.5" evidence="1"/>
<dbReference type="EMBL" id="CP000702">
    <property type="protein sequence ID" value="ABQ47138.1"/>
    <property type="molecule type" value="Genomic_DNA"/>
</dbReference>
<dbReference type="RefSeq" id="WP_011943656.1">
    <property type="nucleotide sequence ID" value="NC_009486.1"/>
</dbReference>
<dbReference type="SMR" id="A5ILR5"/>
<dbReference type="STRING" id="390874.Tpet_1124"/>
<dbReference type="KEGG" id="tpt:Tpet_1124"/>
<dbReference type="eggNOG" id="COG2115">
    <property type="taxonomic scope" value="Bacteria"/>
</dbReference>
<dbReference type="HOGENOM" id="CLU_037261_1_0_0"/>
<dbReference type="Proteomes" id="UP000006558">
    <property type="component" value="Chromosome"/>
</dbReference>
<dbReference type="GO" id="GO:0005737">
    <property type="term" value="C:cytoplasm"/>
    <property type="evidence" value="ECO:0007669"/>
    <property type="project" value="UniProtKB-SubCell"/>
</dbReference>
<dbReference type="GO" id="GO:0000287">
    <property type="term" value="F:magnesium ion binding"/>
    <property type="evidence" value="ECO:0007669"/>
    <property type="project" value="UniProtKB-UniRule"/>
</dbReference>
<dbReference type="GO" id="GO:0009045">
    <property type="term" value="F:xylose isomerase activity"/>
    <property type="evidence" value="ECO:0007669"/>
    <property type="project" value="UniProtKB-UniRule"/>
</dbReference>
<dbReference type="GO" id="GO:0042732">
    <property type="term" value="P:D-xylose metabolic process"/>
    <property type="evidence" value="ECO:0007669"/>
    <property type="project" value="UniProtKB-UniRule"/>
</dbReference>
<dbReference type="FunFam" id="3.20.20.150:FF:000002">
    <property type="entry name" value="Xylose isomerase"/>
    <property type="match status" value="1"/>
</dbReference>
<dbReference type="Gene3D" id="3.20.20.150">
    <property type="entry name" value="Divalent-metal-dependent TIM barrel enzymes"/>
    <property type="match status" value="1"/>
</dbReference>
<dbReference type="HAMAP" id="MF_00455">
    <property type="entry name" value="Xylose_isom_A"/>
    <property type="match status" value="1"/>
</dbReference>
<dbReference type="InterPro" id="IPR036237">
    <property type="entry name" value="Xyl_isomerase-like_sf"/>
</dbReference>
<dbReference type="InterPro" id="IPR013022">
    <property type="entry name" value="Xyl_isomerase-like_TIM-brl"/>
</dbReference>
<dbReference type="InterPro" id="IPR013452">
    <property type="entry name" value="Xylose_isom_bac"/>
</dbReference>
<dbReference type="InterPro" id="IPR001998">
    <property type="entry name" value="Xylose_isomerase"/>
</dbReference>
<dbReference type="NCBIfam" id="NF003998">
    <property type="entry name" value="PRK05474.1"/>
    <property type="match status" value="1"/>
</dbReference>
<dbReference type="NCBIfam" id="TIGR02630">
    <property type="entry name" value="xylose_isom_A"/>
    <property type="match status" value="1"/>
</dbReference>
<dbReference type="PANTHER" id="PTHR48408">
    <property type="match status" value="1"/>
</dbReference>
<dbReference type="PANTHER" id="PTHR48408:SF1">
    <property type="entry name" value="XYLOSE ISOMERASE"/>
    <property type="match status" value="1"/>
</dbReference>
<dbReference type="Pfam" id="PF01261">
    <property type="entry name" value="AP_endonuc_2"/>
    <property type="match status" value="1"/>
</dbReference>
<dbReference type="PRINTS" id="PR00688">
    <property type="entry name" value="XYLOSISMRASE"/>
</dbReference>
<dbReference type="SUPFAM" id="SSF51658">
    <property type="entry name" value="Xylose isomerase-like"/>
    <property type="match status" value="1"/>
</dbReference>
<dbReference type="PROSITE" id="PS51415">
    <property type="entry name" value="XYLOSE_ISOMERASE"/>
    <property type="match status" value="1"/>
</dbReference>
<feature type="chain" id="PRO_1000026458" description="Xylose isomerase">
    <location>
        <begin position="1"/>
        <end position="444"/>
    </location>
</feature>
<feature type="active site" evidence="1">
    <location>
        <position position="101"/>
    </location>
</feature>
<feature type="active site" evidence="1">
    <location>
        <position position="104"/>
    </location>
</feature>
<feature type="binding site" evidence="1">
    <location>
        <position position="232"/>
    </location>
    <ligand>
        <name>Mg(2+)</name>
        <dbReference type="ChEBI" id="CHEBI:18420"/>
        <label>1</label>
    </ligand>
</feature>
<feature type="binding site" evidence="1">
    <location>
        <position position="268"/>
    </location>
    <ligand>
        <name>Mg(2+)</name>
        <dbReference type="ChEBI" id="CHEBI:18420"/>
        <label>1</label>
    </ligand>
</feature>
<feature type="binding site" evidence="1">
    <location>
        <position position="268"/>
    </location>
    <ligand>
        <name>Mg(2+)</name>
        <dbReference type="ChEBI" id="CHEBI:18420"/>
        <label>2</label>
    </ligand>
</feature>
<feature type="binding site" evidence="1">
    <location>
        <position position="271"/>
    </location>
    <ligand>
        <name>Mg(2+)</name>
        <dbReference type="ChEBI" id="CHEBI:18420"/>
        <label>2</label>
    </ligand>
</feature>
<feature type="binding site" evidence="1">
    <location>
        <position position="296"/>
    </location>
    <ligand>
        <name>Mg(2+)</name>
        <dbReference type="ChEBI" id="CHEBI:18420"/>
        <label>1</label>
    </ligand>
</feature>
<feature type="binding site" evidence="1">
    <location>
        <position position="307"/>
    </location>
    <ligand>
        <name>Mg(2+)</name>
        <dbReference type="ChEBI" id="CHEBI:18420"/>
        <label>2</label>
    </ligand>
</feature>
<feature type="binding site" evidence="1">
    <location>
        <position position="309"/>
    </location>
    <ligand>
        <name>Mg(2+)</name>
        <dbReference type="ChEBI" id="CHEBI:18420"/>
        <label>2</label>
    </ligand>
</feature>
<feature type="binding site" evidence="1">
    <location>
        <position position="339"/>
    </location>
    <ligand>
        <name>Mg(2+)</name>
        <dbReference type="ChEBI" id="CHEBI:18420"/>
        <label>1</label>
    </ligand>
</feature>